<accession>Q39D51</accession>
<sequence length="457" mass="50682">MTKKVYVKTFGCQMNEYDSDKMVDVLNAAEGLEKTDTPEDADIILFNTCSVREKAQEKVFSDLGRVRELKEAKPGLLIGVGGCVASQEGASIVSRAPYVDLVFGPQTLHRLPQMIDARRESGRAQVDISFPEIEKFDHLPPARVEGPSAFVSIMEGCSKYCSYCVVPYTRGDEVSRPLDDVLTEVAGLADQGVREVTLLGQNVNAYRGALAAGSSEIADFATLIEYVADIPGIERIRYTTSHPKEFTQRLIDTYAKVPKLVNHLHLPVQHGSDRILMAMKRGYTVLEYKSVIRKLRAIRPDLSLSTDMIVGFPGETEDDFDKMMALVHEMSYDTSFSFIYSPRPGTPAANLHDDTPRDVKLKRLQHLQATIEENVARISQSMVGKVERILVEGPSRKDPNELAGRTENNRVVNFPAPLASHPRLIGQMIDVKINHAYPHSLRGELVLVSDDASAATH</sequence>
<protein>
    <recommendedName>
        <fullName evidence="1">tRNA-2-methylthio-N(6)-dimethylallyladenosine synthase</fullName>
        <ecNumber evidence="1">2.8.4.3</ecNumber>
    </recommendedName>
    <alternativeName>
        <fullName evidence="1">(Dimethylallyl)adenosine tRNA methylthiotransferase MiaB</fullName>
    </alternativeName>
    <alternativeName>
        <fullName evidence="1">tRNA-i(6)A37 methylthiotransferase</fullName>
    </alternativeName>
</protein>
<evidence type="ECO:0000255" key="1">
    <source>
        <dbReference type="HAMAP-Rule" id="MF_01864"/>
    </source>
</evidence>
<evidence type="ECO:0000255" key="2">
    <source>
        <dbReference type="PROSITE-ProRule" id="PRU01266"/>
    </source>
</evidence>
<evidence type="ECO:0000305" key="3"/>
<reference key="1">
    <citation type="submission" date="2005-10" db="EMBL/GenBank/DDBJ databases">
        <title>Complete sequence of chromosome 1 of Burkholderia sp. 383.</title>
        <authorList>
            <consortium name="US DOE Joint Genome Institute"/>
            <person name="Copeland A."/>
            <person name="Lucas S."/>
            <person name="Lapidus A."/>
            <person name="Barry K."/>
            <person name="Detter J.C."/>
            <person name="Glavina T."/>
            <person name="Hammon N."/>
            <person name="Israni S."/>
            <person name="Pitluck S."/>
            <person name="Chain P."/>
            <person name="Malfatti S."/>
            <person name="Shin M."/>
            <person name="Vergez L."/>
            <person name="Schmutz J."/>
            <person name="Larimer F."/>
            <person name="Land M."/>
            <person name="Kyrpides N."/>
            <person name="Lykidis A."/>
            <person name="Richardson P."/>
        </authorList>
    </citation>
    <scope>NUCLEOTIDE SEQUENCE [LARGE SCALE GENOMIC DNA]</scope>
    <source>
        <strain>ATCC 17760 / DSM 23089 / LMG 22485 / NCIMB 9086 / R18194 / 383</strain>
    </source>
</reference>
<gene>
    <name evidence="1" type="primary">miaB</name>
    <name type="ordered locus">Bcep18194_A6021</name>
</gene>
<comment type="function">
    <text evidence="1">Catalyzes the methylthiolation of N6-(dimethylallyl)adenosine (i(6)A), leading to the formation of 2-methylthio-N6-(dimethylallyl)adenosine (ms(2)i(6)A) at position 37 in tRNAs that read codons beginning with uridine.</text>
</comment>
<comment type="catalytic activity">
    <reaction evidence="1">
        <text>N(6)-dimethylallyladenosine(37) in tRNA + (sulfur carrier)-SH + AH2 + 2 S-adenosyl-L-methionine = 2-methylsulfanyl-N(6)-dimethylallyladenosine(37) in tRNA + (sulfur carrier)-H + 5'-deoxyadenosine + L-methionine + A + S-adenosyl-L-homocysteine + 2 H(+)</text>
        <dbReference type="Rhea" id="RHEA:37067"/>
        <dbReference type="Rhea" id="RHEA-COMP:10375"/>
        <dbReference type="Rhea" id="RHEA-COMP:10376"/>
        <dbReference type="Rhea" id="RHEA-COMP:14737"/>
        <dbReference type="Rhea" id="RHEA-COMP:14739"/>
        <dbReference type="ChEBI" id="CHEBI:13193"/>
        <dbReference type="ChEBI" id="CHEBI:15378"/>
        <dbReference type="ChEBI" id="CHEBI:17319"/>
        <dbReference type="ChEBI" id="CHEBI:17499"/>
        <dbReference type="ChEBI" id="CHEBI:29917"/>
        <dbReference type="ChEBI" id="CHEBI:57844"/>
        <dbReference type="ChEBI" id="CHEBI:57856"/>
        <dbReference type="ChEBI" id="CHEBI:59789"/>
        <dbReference type="ChEBI" id="CHEBI:64428"/>
        <dbReference type="ChEBI" id="CHEBI:74415"/>
        <dbReference type="ChEBI" id="CHEBI:74417"/>
        <dbReference type="EC" id="2.8.4.3"/>
    </reaction>
</comment>
<comment type="cofactor">
    <cofactor evidence="1">
        <name>[4Fe-4S] cluster</name>
        <dbReference type="ChEBI" id="CHEBI:49883"/>
    </cofactor>
    <text evidence="1">Binds 2 [4Fe-4S] clusters. One cluster is coordinated with 3 cysteines and an exchangeable S-adenosyl-L-methionine.</text>
</comment>
<comment type="subunit">
    <text evidence="1">Monomer.</text>
</comment>
<comment type="subcellular location">
    <subcellularLocation>
        <location evidence="1">Cytoplasm</location>
    </subcellularLocation>
</comment>
<comment type="similarity">
    <text evidence="1">Belongs to the methylthiotransferase family. MiaB subfamily.</text>
</comment>
<comment type="sequence caution" evidence="3">
    <conflict type="erroneous initiation">
        <sequence resource="EMBL-CDS" id="ABB09615"/>
    </conflict>
</comment>
<proteinExistence type="inferred from homology"/>
<name>MIAB_BURL3</name>
<feature type="chain" id="PRO_0000374189" description="tRNA-2-methylthio-N(6)-dimethylallyladenosine synthase">
    <location>
        <begin position="1"/>
        <end position="457"/>
    </location>
</feature>
<feature type="domain" description="MTTase N-terminal" evidence="1">
    <location>
        <begin position="3"/>
        <end position="120"/>
    </location>
</feature>
<feature type="domain" description="Radical SAM core" evidence="2">
    <location>
        <begin position="143"/>
        <end position="377"/>
    </location>
</feature>
<feature type="domain" description="TRAM" evidence="1">
    <location>
        <begin position="380"/>
        <end position="447"/>
    </location>
</feature>
<feature type="binding site" evidence="1">
    <location>
        <position position="12"/>
    </location>
    <ligand>
        <name>[4Fe-4S] cluster</name>
        <dbReference type="ChEBI" id="CHEBI:49883"/>
        <label>1</label>
    </ligand>
</feature>
<feature type="binding site" evidence="1">
    <location>
        <position position="49"/>
    </location>
    <ligand>
        <name>[4Fe-4S] cluster</name>
        <dbReference type="ChEBI" id="CHEBI:49883"/>
        <label>1</label>
    </ligand>
</feature>
<feature type="binding site" evidence="1">
    <location>
        <position position="83"/>
    </location>
    <ligand>
        <name>[4Fe-4S] cluster</name>
        <dbReference type="ChEBI" id="CHEBI:49883"/>
        <label>1</label>
    </ligand>
</feature>
<feature type="binding site" evidence="1">
    <location>
        <position position="157"/>
    </location>
    <ligand>
        <name>[4Fe-4S] cluster</name>
        <dbReference type="ChEBI" id="CHEBI:49883"/>
        <label>2</label>
        <note>4Fe-4S-S-AdoMet</note>
    </ligand>
</feature>
<feature type="binding site" evidence="1">
    <location>
        <position position="161"/>
    </location>
    <ligand>
        <name>[4Fe-4S] cluster</name>
        <dbReference type="ChEBI" id="CHEBI:49883"/>
        <label>2</label>
        <note>4Fe-4S-S-AdoMet</note>
    </ligand>
</feature>
<feature type="binding site" evidence="1">
    <location>
        <position position="164"/>
    </location>
    <ligand>
        <name>[4Fe-4S] cluster</name>
        <dbReference type="ChEBI" id="CHEBI:49883"/>
        <label>2</label>
        <note>4Fe-4S-S-AdoMet</note>
    </ligand>
</feature>
<keyword id="KW-0004">4Fe-4S</keyword>
<keyword id="KW-0963">Cytoplasm</keyword>
<keyword id="KW-0408">Iron</keyword>
<keyword id="KW-0411">Iron-sulfur</keyword>
<keyword id="KW-0479">Metal-binding</keyword>
<keyword id="KW-0949">S-adenosyl-L-methionine</keyword>
<keyword id="KW-0808">Transferase</keyword>
<keyword id="KW-0819">tRNA processing</keyword>
<organism>
    <name type="scientific">Burkholderia lata (strain ATCC 17760 / DSM 23089 / LMG 22485 / NCIMB 9086 / R18194 / 383)</name>
    <dbReference type="NCBI Taxonomy" id="482957"/>
    <lineage>
        <taxon>Bacteria</taxon>
        <taxon>Pseudomonadati</taxon>
        <taxon>Pseudomonadota</taxon>
        <taxon>Betaproteobacteria</taxon>
        <taxon>Burkholderiales</taxon>
        <taxon>Burkholderiaceae</taxon>
        <taxon>Burkholderia</taxon>
        <taxon>Burkholderia cepacia complex</taxon>
    </lineage>
</organism>
<dbReference type="EC" id="2.8.4.3" evidence="1"/>
<dbReference type="EMBL" id="CP000151">
    <property type="protein sequence ID" value="ABB09615.1"/>
    <property type="status" value="ALT_INIT"/>
    <property type="molecule type" value="Genomic_DNA"/>
</dbReference>
<dbReference type="RefSeq" id="WP_041492951.1">
    <property type="nucleotide sequence ID" value="NC_007510.1"/>
</dbReference>
<dbReference type="SMR" id="Q39D51"/>
<dbReference type="GeneID" id="45095904"/>
<dbReference type="KEGG" id="bur:Bcep18194_A6021"/>
<dbReference type="PATRIC" id="fig|482957.22.peg.3020"/>
<dbReference type="HOGENOM" id="CLU_018697_2_0_4"/>
<dbReference type="Proteomes" id="UP000002705">
    <property type="component" value="Chromosome 1"/>
</dbReference>
<dbReference type="GO" id="GO:0005829">
    <property type="term" value="C:cytosol"/>
    <property type="evidence" value="ECO:0007669"/>
    <property type="project" value="TreeGrafter"/>
</dbReference>
<dbReference type="GO" id="GO:0051539">
    <property type="term" value="F:4 iron, 4 sulfur cluster binding"/>
    <property type="evidence" value="ECO:0007669"/>
    <property type="project" value="UniProtKB-UniRule"/>
</dbReference>
<dbReference type="GO" id="GO:0046872">
    <property type="term" value="F:metal ion binding"/>
    <property type="evidence" value="ECO:0007669"/>
    <property type="project" value="UniProtKB-KW"/>
</dbReference>
<dbReference type="GO" id="GO:0035597">
    <property type="term" value="F:N6-isopentenyladenosine methylthiotransferase activity"/>
    <property type="evidence" value="ECO:0007669"/>
    <property type="project" value="TreeGrafter"/>
</dbReference>
<dbReference type="CDD" id="cd01335">
    <property type="entry name" value="Radical_SAM"/>
    <property type="match status" value="1"/>
</dbReference>
<dbReference type="FunFam" id="3.40.50.12160:FF:000001">
    <property type="entry name" value="tRNA-2-methylthio-N(6)-dimethylallyladenosine synthase"/>
    <property type="match status" value="1"/>
</dbReference>
<dbReference type="FunFam" id="3.80.30.20:FF:000001">
    <property type="entry name" value="tRNA-2-methylthio-N(6)-dimethylallyladenosine synthase 2"/>
    <property type="match status" value="1"/>
</dbReference>
<dbReference type="Gene3D" id="3.40.50.12160">
    <property type="entry name" value="Methylthiotransferase, N-terminal domain"/>
    <property type="match status" value="1"/>
</dbReference>
<dbReference type="Gene3D" id="3.80.30.20">
    <property type="entry name" value="tm_1862 like domain"/>
    <property type="match status" value="1"/>
</dbReference>
<dbReference type="HAMAP" id="MF_01864">
    <property type="entry name" value="tRNA_metthiotr_MiaB"/>
    <property type="match status" value="1"/>
</dbReference>
<dbReference type="InterPro" id="IPR006638">
    <property type="entry name" value="Elp3/MiaA/NifB-like_rSAM"/>
</dbReference>
<dbReference type="InterPro" id="IPR005839">
    <property type="entry name" value="Methylthiotransferase"/>
</dbReference>
<dbReference type="InterPro" id="IPR020612">
    <property type="entry name" value="Methylthiotransferase_CS"/>
</dbReference>
<dbReference type="InterPro" id="IPR013848">
    <property type="entry name" value="Methylthiotransferase_N"/>
</dbReference>
<dbReference type="InterPro" id="IPR038135">
    <property type="entry name" value="Methylthiotransferase_N_sf"/>
</dbReference>
<dbReference type="InterPro" id="IPR006463">
    <property type="entry name" value="MiaB_methiolase"/>
</dbReference>
<dbReference type="InterPro" id="IPR007197">
    <property type="entry name" value="rSAM"/>
</dbReference>
<dbReference type="InterPro" id="IPR023404">
    <property type="entry name" value="rSAM_horseshoe"/>
</dbReference>
<dbReference type="InterPro" id="IPR002792">
    <property type="entry name" value="TRAM_dom"/>
</dbReference>
<dbReference type="NCBIfam" id="TIGR01574">
    <property type="entry name" value="miaB-methiolase"/>
    <property type="match status" value="1"/>
</dbReference>
<dbReference type="NCBIfam" id="TIGR00089">
    <property type="entry name" value="MiaB/RimO family radical SAM methylthiotransferase"/>
    <property type="match status" value="1"/>
</dbReference>
<dbReference type="PANTHER" id="PTHR43020">
    <property type="entry name" value="CDK5 REGULATORY SUBUNIT-ASSOCIATED PROTEIN 1"/>
    <property type="match status" value="1"/>
</dbReference>
<dbReference type="PANTHER" id="PTHR43020:SF2">
    <property type="entry name" value="MITOCHONDRIAL TRNA METHYLTHIOTRANSFERASE CDK5RAP1"/>
    <property type="match status" value="1"/>
</dbReference>
<dbReference type="Pfam" id="PF04055">
    <property type="entry name" value="Radical_SAM"/>
    <property type="match status" value="1"/>
</dbReference>
<dbReference type="Pfam" id="PF01938">
    <property type="entry name" value="TRAM"/>
    <property type="match status" value="1"/>
</dbReference>
<dbReference type="Pfam" id="PF00919">
    <property type="entry name" value="UPF0004"/>
    <property type="match status" value="1"/>
</dbReference>
<dbReference type="SFLD" id="SFLDF00273">
    <property type="entry name" value="(dimethylallyl)adenosine_tRNA"/>
    <property type="match status" value="1"/>
</dbReference>
<dbReference type="SFLD" id="SFLDG01082">
    <property type="entry name" value="B12-binding_domain_containing"/>
    <property type="match status" value="1"/>
</dbReference>
<dbReference type="SFLD" id="SFLDS00029">
    <property type="entry name" value="Radical_SAM"/>
    <property type="match status" value="1"/>
</dbReference>
<dbReference type="SMART" id="SM00729">
    <property type="entry name" value="Elp3"/>
    <property type="match status" value="1"/>
</dbReference>
<dbReference type="SUPFAM" id="SSF102114">
    <property type="entry name" value="Radical SAM enzymes"/>
    <property type="match status" value="1"/>
</dbReference>
<dbReference type="PROSITE" id="PS51449">
    <property type="entry name" value="MTTASE_N"/>
    <property type="match status" value="1"/>
</dbReference>
<dbReference type="PROSITE" id="PS01278">
    <property type="entry name" value="MTTASE_RADICAL"/>
    <property type="match status" value="1"/>
</dbReference>
<dbReference type="PROSITE" id="PS51918">
    <property type="entry name" value="RADICAL_SAM"/>
    <property type="match status" value="1"/>
</dbReference>
<dbReference type="PROSITE" id="PS50926">
    <property type="entry name" value="TRAM"/>
    <property type="match status" value="1"/>
</dbReference>